<protein>
    <recommendedName>
        <fullName>Cicadin</fullName>
    </recommendedName>
</protein>
<dbReference type="SMR" id="P83282"/>
<dbReference type="GO" id="GO:0042742">
    <property type="term" value="P:defense response to bacterium"/>
    <property type="evidence" value="ECO:0007669"/>
    <property type="project" value="UniProtKB-KW"/>
</dbReference>
<dbReference type="GO" id="GO:0050832">
    <property type="term" value="P:defense response to fungus"/>
    <property type="evidence" value="ECO:0000314"/>
    <property type="project" value="UniProtKB"/>
</dbReference>
<dbReference type="GO" id="GO:0031640">
    <property type="term" value="P:killing of cells of another organism"/>
    <property type="evidence" value="ECO:0007669"/>
    <property type="project" value="UniProtKB-KW"/>
</dbReference>
<dbReference type="GO" id="GO:0008284">
    <property type="term" value="P:positive regulation of cell population proliferation"/>
    <property type="evidence" value="ECO:0000304"/>
    <property type="project" value="UniProtKB"/>
</dbReference>
<dbReference type="Gene3D" id="2.40.50.60">
    <property type="entry name" value="Antifungal protein domain"/>
    <property type="match status" value="1"/>
</dbReference>
<dbReference type="InterPro" id="IPR023112">
    <property type="entry name" value="Antifungal-protein_dom_sf"/>
</dbReference>
<name>CICD_CICFL</name>
<sequence length="55" mass="6596">NEYHGFVDKANNENKRKKQQGRDDFVVKPNNFANRRRKDDYNENYYDDVDAADVV</sequence>
<feature type="chain" id="PRO_0000089745" description="Cicadin">
    <location>
        <begin position="1"/>
        <end position="55" status="greater than"/>
    </location>
</feature>
<feature type="region of interest" description="Disordered" evidence="1">
    <location>
        <begin position="1"/>
        <end position="39"/>
    </location>
</feature>
<feature type="compositionally biased region" description="Basic and acidic residues" evidence="1">
    <location>
        <begin position="1"/>
        <end position="26"/>
    </location>
</feature>
<feature type="non-terminal residue" evidence="3">
    <location>
        <position position="55"/>
    </location>
</feature>
<keyword id="KW-0044">Antibiotic</keyword>
<keyword id="KW-0929">Antimicrobial</keyword>
<keyword id="KW-0903">Direct protein sequencing</keyword>
<keyword id="KW-0295">Fungicide</keyword>
<reference evidence="4" key="1">
    <citation type="journal article" date="2002" name="Peptides">
        <title>Isolation of cicadin, a novel and potent antifungal peptide from dried juvenile cicadas.</title>
        <authorList>
            <person name="Wang H."/>
            <person name="Ng T.B."/>
        </authorList>
    </citation>
    <scope>PROTEIN SEQUENCE</scope>
    <scope>FUNCTION</scope>
</reference>
<proteinExistence type="evidence at protein level"/>
<comment type="function">
    <text evidence="2">Possesses antifungal activity against B.cinerea, M.arachidicola, F.oxysporum, R.solani and C.comatus.</text>
</comment>
<comment type="function">
    <text evidence="2">Suppresses the activity of HIV-1 reverse transcriptase and stimulates the proliferation of murine splenocytes.</text>
</comment>
<evidence type="ECO:0000256" key="1">
    <source>
        <dbReference type="SAM" id="MobiDB-lite"/>
    </source>
</evidence>
<evidence type="ECO:0000269" key="2">
    <source>
    </source>
</evidence>
<evidence type="ECO:0000303" key="3">
    <source>
    </source>
</evidence>
<evidence type="ECO:0000305" key="4"/>
<accession>P83282</accession>
<organism evidence="4">
    <name type="scientific">Cicada flammata</name>
    <dbReference type="NCBI Taxonomy" id="186872"/>
    <lineage>
        <taxon>Eukaryota</taxon>
        <taxon>Metazoa</taxon>
        <taxon>Ecdysozoa</taxon>
        <taxon>Arthropoda</taxon>
        <taxon>Hexapoda</taxon>
        <taxon>Insecta</taxon>
        <taxon>Pterygota</taxon>
        <taxon>Neoptera</taxon>
        <taxon>Paraneoptera</taxon>
        <taxon>Hemiptera</taxon>
        <taxon>Auchenorrhyncha</taxon>
        <taxon>Cicadoidea</taxon>
        <taxon>Cicadidae</taxon>
        <taxon>Cicadinae</taxon>
        <taxon>Cicadini</taxon>
        <taxon>Cicada</taxon>
    </lineage>
</organism>